<reference key="1">
    <citation type="journal article" date="2012" name="Environ. Microbiol.">
        <title>The genome sequence of Desulfatibacillum alkenivorans AK-01: a blueprint for anaerobic alkane oxidation.</title>
        <authorList>
            <person name="Callaghan A.V."/>
            <person name="Morris B.E."/>
            <person name="Pereira I.A."/>
            <person name="McInerney M.J."/>
            <person name="Austin R.N."/>
            <person name="Groves J.T."/>
            <person name="Kukor J.J."/>
            <person name="Suflita J.M."/>
            <person name="Young L.Y."/>
            <person name="Zylstra G.J."/>
            <person name="Wawrik B."/>
        </authorList>
    </citation>
    <scope>NUCLEOTIDE SEQUENCE [LARGE SCALE GENOMIC DNA]</scope>
    <source>
        <strain>AK-01</strain>
    </source>
</reference>
<name>GATA_DESAL</name>
<organism>
    <name type="scientific">Desulfatibacillum aliphaticivorans</name>
    <dbReference type="NCBI Taxonomy" id="218208"/>
    <lineage>
        <taxon>Bacteria</taxon>
        <taxon>Pseudomonadati</taxon>
        <taxon>Thermodesulfobacteriota</taxon>
        <taxon>Desulfobacteria</taxon>
        <taxon>Desulfobacterales</taxon>
        <taxon>Desulfatibacillaceae</taxon>
        <taxon>Desulfatibacillum</taxon>
    </lineage>
</organism>
<dbReference type="EC" id="6.3.5.7" evidence="1"/>
<dbReference type="EMBL" id="CP001322">
    <property type="protein sequence ID" value="ACL06172.1"/>
    <property type="molecule type" value="Genomic_DNA"/>
</dbReference>
<dbReference type="RefSeq" id="WP_015949218.1">
    <property type="nucleotide sequence ID" value="NC_011768.1"/>
</dbReference>
<dbReference type="SMR" id="B8FCK9"/>
<dbReference type="KEGG" id="dal:Dalk_4493"/>
<dbReference type="eggNOG" id="COG0154">
    <property type="taxonomic scope" value="Bacteria"/>
</dbReference>
<dbReference type="HOGENOM" id="CLU_009600_0_3_7"/>
<dbReference type="Proteomes" id="UP000000739">
    <property type="component" value="Chromosome"/>
</dbReference>
<dbReference type="GO" id="GO:0030956">
    <property type="term" value="C:glutamyl-tRNA(Gln) amidotransferase complex"/>
    <property type="evidence" value="ECO:0007669"/>
    <property type="project" value="InterPro"/>
</dbReference>
<dbReference type="GO" id="GO:0005524">
    <property type="term" value="F:ATP binding"/>
    <property type="evidence" value="ECO:0007669"/>
    <property type="project" value="UniProtKB-KW"/>
</dbReference>
<dbReference type="GO" id="GO:0050567">
    <property type="term" value="F:glutaminyl-tRNA synthase (glutamine-hydrolyzing) activity"/>
    <property type="evidence" value="ECO:0007669"/>
    <property type="project" value="UniProtKB-UniRule"/>
</dbReference>
<dbReference type="GO" id="GO:0006412">
    <property type="term" value="P:translation"/>
    <property type="evidence" value="ECO:0007669"/>
    <property type="project" value="UniProtKB-UniRule"/>
</dbReference>
<dbReference type="Gene3D" id="3.90.1300.10">
    <property type="entry name" value="Amidase signature (AS) domain"/>
    <property type="match status" value="1"/>
</dbReference>
<dbReference type="HAMAP" id="MF_00120">
    <property type="entry name" value="GatA"/>
    <property type="match status" value="1"/>
</dbReference>
<dbReference type="InterPro" id="IPR000120">
    <property type="entry name" value="Amidase"/>
</dbReference>
<dbReference type="InterPro" id="IPR020556">
    <property type="entry name" value="Amidase_CS"/>
</dbReference>
<dbReference type="InterPro" id="IPR023631">
    <property type="entry name" value="Amidase_dom"/>
</dbReference>
<dbReference type="InterPro" id="IPR036928">
    <property type="entry name" value="AS_sf"/>
</dbReference>
<dbReference type="InterPro" id="IPR004412">
    <property type="entry name" value="GatA"/>
</dbReference>
<dbReference type="NCBIfam" id="TIGR00132">
    <property type="entry name" value="gatA"/>
    <property type="match status" value="1"/>
</dbReference>
<dbReference type="PANTHER" id="PTHR11895:SF151">
    <property type="entry name" value="GLUTAMYL-TRNA(GLN) AMIDOTRANSFERASE SUBUNIT A"/>
    <property type="match status" value="1"/>
</dbReference>
<dbReference type="PANTHER" id="PTHR11895">
    <property type="entry name" value="TRANSAMIDASE"/>
    <property type="match status" value="1"/>
</dbReference>
<dbReference type="Pfam" id="PF01425">
    <property type="entry name" value="Amidase"/>
    <property type="match status" value="1"/>
</dbReference>
<dbReference type="SUPFAM" id="SSF75304">
    <property type="entry name" value="Amidase signature (AS) enzymes"/>
    <property type="match status" value="1"/>
</dbReference>
<dbReference type="PROSITE" id="PS00571">
    <property type="entry name" value="AMIDASES"/>
    <property type="match status" value="1"/>
</dbReference>
<feature type="chain" id="PRO_1000117609" description="Glutamyl-tRNA(Gln) amidotransferase subunit A">
    <location>
        <begin position="1"/>
        <end position="485"/>
    </location>
</feature>
<feature type="active site" description="Charge relay system" evidence="1">
    <location>
        <position position="78"/>
    </location>
</feature>
<feature type="active site" description="Charge relay system" evidence="1">
    <location>
        <position position="153"/>
    </location>
</feature>
<feature type="active site" description="Acyl-ester intermediate" evidence="1">
    <location>
        <position position="177"/>
    </location>
</feature>
<protein>
    <recommendedName>
        <fullName evidence="1">Glutamyl-tRNA(Gln) amidotransferase subunit A</fullName>
        <shortName evidence="1">Glu-ADT subunit A</shortName>
        <ecNumber evidence="1">6.3.5.7</ecNumber>
    </recommendedName>
</protein>
<sequence length="485" mass="51938">MALHELTIGQAREKLLSKEISSQDLTKAVLDRIEAVEPQVDAYLTVSKEEAMEAAQKADKALAQGETAPLCGIPLAIKDVMCTKGVLTTCASKILGNFVPPYDATSITKLKEAGAVLVGKTNMDEFAMGSSTENSAFKTTKNPWDLTRTPGGSSGGSAAAVAADMCLGAFGSDTGGSIRQPGSHCSVVGLKPTYGRVSRYGLVAFASSLDQIGPFAKTVEDAAILLQAVAGYDPSDSTSVNVEVPDYTTAIQEDVKGMRVGMPKEYFEMGGLTPDVKNSVDQAIKTLESQGVEVMDVSLPHSKYCVAVYYVIAPAEASSNLARYDGVKYGMREERDSLIDMYHATRSSGFGPEVQRRIIIGTYALSAGYYDAYYGKASQVRTLIMEDYKKAFEKCDAIISPVAPTPAFKLGENTDDPLTMYLSDIFTLSANLAGVCGVSVPCGFSSEGLPIGLQLQGSHFQEEKILRLGHHFQKATDFHTKRPNL</sequence>
<proteinExistence type="inferred from homology"/>
<keyword id="KW-0067">ATP-binding</keyword>
<keyword id="KW-0436">Ligase</keyword>
<keyword id="KW-0547">Nucleotide-binding</keyword>
<keyword id="KW-0648">Protein biosynthesis</keyword>
<keyword id="KW-1185">Reference proteome</keyword>
<accession>B8FCK9</accession>
<comment type="function">
    <text evidence="1">Allows the formation of correctly charged Gln-tRNA(Gln) through the transamidation of misacylated Glu-tRNA(Gln) in organisms which lack glutaminyl-tRNA synthetase. The reaction takes place in the presence of glutamine and ATP through an activated gamma-phospho-Glu-tRNA(Gln).</text>
</comment>
<comment type="catalytic activity">
    <reaction evidence="1">
        <text>L-glutamyl-tRNA(Gln) + L-glutamine + ATP + H2O = L-glutaminyl-tRNA(Gln) + L-glutamate + ADP + phosphate + H(+)</text>
        <dbReference type="Rhea" id="RHEA:17521"/>
        <dbReference type="Rhea" id="RHEA-COMP:9681"/>
        <dbReference type="Rhea" id="RHEA-COMP:9684"/>
        <dbReference type="ChEBI" id="CHEBI:15377"/>
        <dbReference type="ChEBI" id="CHEBI:15378"/>
        <dbReference type="ChEBI" id="CHEBI:29985"/>
        <dbReference type="ChEBI" id="CHEBI:30616"/>
        <dbReference type="ChEBI" id="CHEBI:43474"/>
        <dbReference type="ChEBI" id="CHEBI:58359"/>
        <dbReference type="ChEBI" id="CHEBI:78520"/>
        <dbReference type="ChEBI" id="CHEBI:78521"/>
        <dbReference type="ChEBI" id="CHEBI:456216"/>
        <dbReference type="EC" id="6.3.5.7"/>
    </reaction>
</comment>
<comment type="subunit">
    <text evidence="1">Heterotrimer of A, B and C subunits.</text>
</comment>
<comment type="similarity">
    <text evidence="1">Belongs to the amidase family. GatA subfamily.</text>
</comment>
<gene>
    <name evidence="1" type="primary">gatA</name>
    <name type="ordered locus">Dalk_4493</name>
</gene>
<evidence type="ECO:0000255" key="1">
    <source>
        <dbReference type="HAMAP-Rule" id="MF_00120"/>
    </source>
</evidence>